<gene>
    <name type="primary">CCZ1</name>
    <name type="ORF">RCJMB04_5g18</name>
</gene>
<reference key="1">
    <citation type="journal article" date="2005" name="Genome Biol.">
        <title>Full-length cDNAs from chicken bursal lymphocytes to facilitate gene function analysis.</title>
        <authorList>
            <person name="Caldwell R.B."/>
            <person name="Kierzek A.M."/>
            <person name="Arakawa H."/>
            <person name="Bezzubov Y."/>
            <person name="Zaim J."/>
            <person name="Fiedler P."/>
            <person name="Kutter S."/>
            <person name="Blagodatski A."/>
            <person name="Kostovska D."/>
            <person name="Koter M."/>
            <person name="Plachy J."/>
            <person name="Carninci P."/>
            <person name="Hayashizaki Y."/>
            <person name="Buerstedde J.-M."/>
        </authorList>
    </citation>
    <scope>NUCLEOTIDE SEQUENCE [LARGE SCALE MRNA]</scope>
    <source>
        <strain>CB</strain>
        <tissue>Bursa of Fabricius</tissue>
    </source>
</reference>
<organism>
    <name type="scientific">Gallus gallus</name>
    <name type="common">Chicken</name>
    <dbReference type="NCBI Taxonomy" id="9031"/>
    <lineage>
        <taxon>Eukaryota</taxon>
        <taxon>Metazoa</taxon>
        <taxon>Chordata</taxon>
        <taxon>Craniata</taxon>
        <taxon>Vertebrata</taxon>
        <taxon>Euteleostomi</taxon>
        <taxon>Archelosauria</taxon>
        <taxon>Archosauria</taxon>
        <taxon>Dinosauria</taxon>
        <taxon>Saurischia</taxon>
        <taxon>Theropoda</taxon>
        <taxon>Coelurosauria</taxon>
        <taxon>Aves</taxon>
        <taxon>Neognathae</taxon>
        <taxon>Galloanserae</taxon>
        <taxon>Galliformes</taxon>
        <taxon>Phasianidae</taxon>
        <taxon>Phasianinae</taxon>
        <taxon>Gallus</taxon>
    </lineage>
</organism>
<protein>
    <recommendedName>
        <fullName>Vacuolar fusion protein CCZ1 homolog</fullName>
    </recommendedName>
</protein>
<dbReference type="EMBL" id="AJ719702">
    <property type="protein sequence ID" value="CAG31361.1"/>
    <property type="molecule type" value="mRNA"/>
</dbReference>
<dbReference type="RefSeq" id="NP_001006158.1">
    <property type="nucleotide sequence ID" value="NM_001006158.1"/>
</dbReference>
<dbReference type="SMR" id="Q5ZLN2"/>
<dbReference type="FunCoup" id="Q5ZLN2">
    <property type="interactions" value="1537"/>
</dbReference>
<dbReference type="STRING" id="9031.ENSGALP00000005469"/>
<dbReference type="PaxDb" id="9031-ENSGALP00000005469"/>
<dbReference type="GeneID" id="416433"/>
<dbReference type="KEGG" id="gga:416433"/>
<dbReference type="CTD" id="51622"/>
<dbReference type="VEuPathDB" id="HostDB:geneid_416433"/>
<dbReference type="eggNOG" id="KOG2622">
    <property type="taxonomic scope" value="Eukaryota"/>
</dbReference>
<dbReference type="HOGENOM" id="CLU_037828_2_0_1"/>
<dbReference type="InParanoid" id="Q5ZLN2"/>
<dbReference type="OrthoDB" id="240546at2759"/>
<dbReference type="PhylomeDB" id="Q5ZLN2"/>
<dbReference type="PRO" id="PR:Q5ZLN2"/>
<dbReference type="Proteomes" id="UP000000539">
    <property type="component" value="Unassembled WGS sequence"/>
</dbReference>
<dbReference type="GO" id="GO:0043231">
    <property type="term" value="C:intracellular membrane-bounded organelle"/>
    <property type="evidence" value="ECO:0000318"/>
    <property type="project" value="GO_Central"/>
</dbReference>
<dbReference type="GO" id="GO:0005765">
    <property type="term" value="C:lysosomal membrane"/>
    <property type="evidence" value="ECO:0007669"/>
    <property type="project" value="UniProtKB-SubCell"/>
</dbReference>
<dbReference type="GO" id="GO:0035658">
    <property type="term" value="C:Mon1-Ccz1 complex"/>
    <property type="evidence" value="ECO:0007669"/>
    <property type="project" value="InterPro"/>
</dbReference>
<dbReference type="GO" id="GO:0016192">
    <property type="term" value="P:vesicle-mediated transport"/>
    <property type="evidence" value="ECO:0000318"/>
    <property type="project" value="GO_Central"/>
</dbReference>
<dbReference type="InterPro" id="IPR013176">
    <property type="entry name" value="Ccz1"/>
</dbReference>
<dbReference type="InterPro" id="IPR043987">
    <property type="entry name" value="CCZ1/INTU/HSP4_longin_1"/>
</dbReference>
<dbReference type="InterPro" id="IPR043989">
    <property type="entry name" value="CCZ1/INTU/HSP4_longin_3"/>
</dbReference>
<dbReference type="InterPro" id="IPR043988">
    <property type="entry name" value="CCZ1/INTU_longin_2"/>
</dbReference>
<dbReference type="PANTHER" id="PTHR13056">
    <property type="entry name" value="VACUOLAR FUSION PROTEIN CCZ1 HOMOLOG-RELATED"/>
    <property type="match status" value="1"/>
</dbReference>
<dbReference type="PANTHER" id="PTHR13056:SF0">
    <property type="entry name" value="VACUOLAR FUSION PROTEIN CCZ1 HOMOLOG-RELATED"/>
    <property type="match status" value="1"/>
</dbReference>
<dbReference type="Pfam" id="PF19031">
    <property type="entry name" value="Intu_longin_1"/>
    <property type="match status" value="1"/>
</dbReference>
<dbReference type="Pfam" id="PF19032">
    <property type="entry name" value="Intu_longin_2"/>
    <property type="match status" value="1"/>
</dbReference>
<dbReference type="Pfam" id="PF19033">
    <property type="entry name" value="Intu_longin_3"/>
    <property type="match status" value="1"/>
</dbReference>
<comment type="subcellular location">
    <subcellularLocation>
        <location evidence="1">Lysosome membrane</location>
    </subcellularLocation>
</comment>
<comment type="similarity">
    <text evidence="2">Belongs to the CCZ1 family.</text>
</comment>
<feature type="chain" id="PRO_0000327400" description="Vacuolar fusion protein CCZ1 homolog">
    <location>
        <begin position="1"/>
        <end position="476"/>
    </location>
</feature>
<accession>Q5ZLN2</accession>
<evidence type="ECO:0000250" key="1"/>
<evidence type="ECO:0000305" key="2"/>
<name>CCZ1_CHICK</name>
<proteinExistence type="evidence at transcript level"/>
<keyword id="KW-0458">Lysosome</keyword>
<keyword id="KW-0472">Membrane</keyword>
<keyword id="KW-1185">Reference proteome</keyword>
<sequence>MATAAAAGAGQEKQLAPTLLSFFIYNPKLGPKEGEEEKKILFYHPNEVEKNEKIRNVGLCEAIVQFTRTFSPTKPAKSLHTQKNRQFFHEPEENFWMVMVVRNPIIEKHKDGKPVYEYQEEELLDKVYSSVLQQCYSMYKLFNGTFLKAMEDGGVKVLKERLEKFFHRYLQTLHLQSCDLLDVFCGISFFPLDKMTYLKIQSFINRMEESLNIVKYTAFLYNDQLIWSGLEQDDMRILYKYLTTSLFPRHMEPELAGRDSPIRAEMPGNLQHYGRFLTGPLNLNDPEAKCRFPKIFVNTDDTYEELHLIVYKAMSAAVCFMIDASIPPTLEFCRKLDSIVGPQLTVLASDICEQYNINKRISGAEKEPQFKFIYFNHMNLAEKSTIHMRKTPSVSLASVHPDLMKILGDINSDFSRVDEDEEIIVKAMSDYWVVGKKSDQRELYVILNQKNANLIEVNEEVKKLCATQFNNIFFLD</sequence>